<dbReference type="EMBL" id="CP000097">
    <property type="protein sequence ID" value="ABB26692.1"/>
    <property type="molecule type" value="Genomic_DNA"/>
</dbReference>
<dbReference type="RefSeq" id="WP_011360499.1">
    <property type="nucleotide sequence ID" value="NC_007513.1"/>
</dbReference>
<dbReference type="SMR" id="Q3AWL6"/>
<dbReference type="STRING" id="316279.Syncc9902_1735"/>
<dbReference type="KEGG" id="sye:Syncc9902_1735"/>
<dbReference type="eggNOG" id="COG0739">
    <property type="taxonomic scope" value="Bacteria"/>
</dbReference>
<dbReference type="HOGENOM" id="CLU_033498_0_0_3"/>
<dbReference type="OrthoDB" id="581091at2"/>
<dbReference type="Proteomes" id="UP000002712">
    <property type="component" value="Chromosome"/>
</dbReference>
<dbReference type="GO" id="GO:0031676">
    <property type="term" value="C:plasma membrane-derived thylakoid membrane"/>
    <property type="evidence" value="ECO:0007669"/>
    <property type="project" value="UniProtKB-SubCell"/>
</dbReference>
<dbReference type="GO" id="GO:0009055">
    <property type="term" value="F:electron transfer activity"/>
    <property type="evidence" value="ECO:0007669"/>
    <property type="project" value="UniProtKB-UniRule"/>
</dbReference>
<dbReference type="GO" id="GO:0020037">
    <property type="term" value="F:heme binding"/>
    <property type="evidence" value="ECO:0007669"/>
    <property type="project" value="InterPro"/>
</dbReference>
<dbReference type="GO" id="GO:0005506">
    <property type="term" value="F:iron ion binding"/>
    <property type="evidence" value="ECO:0007669"/>
    <property type="project" value="InterPro"/>
</dbReference>
<dbReference type="GO" id="GO:0015979">
    <property type="term" value="P:photosynthesis"/>
    <property type="evidence" value="ECO:0007669"/>
    <property type="project" value="UniProtKB-UniRule"/>
</dbReference>
<dbReference type="FunFam" id="2.60.40.830:FF:000001">
    <property type="entry name" value="Cytochrome f"/>
    <property type="match status" value="1"/>
</dbReference>
<dbReference type="Gene3D" id="2.40.50.100">
    <property type="match status" value="1"/>
</dbReference>
<dbReference type="Gene3D" id="2.60.40.830">
    <property type="entry name" value="Cytochrome f large domain"/>
    <property type="match status" value="1"/>
</dbReference>
<dbReference type="Gene3D" id="1.20.5.700">
    <property type="entry name" value="Single helix bin"/>
    <property type="match status" value="1"/>
</dbReference>
<dbReference type="HAMAP" id="MF_00610">
    <property type="entry name" value="Cytb6_f_cytF"/>
    <property type="match status" value="1"/>
</dbReference>
<dbReference type="InterPro" id="IPR024058">
    <property type="entry name" value="Cyt-f_TM"/>
</dbReference>
<dbReference type="InterPro" id="IPR002325">
    <property type="entry name" value="Cyt_f"/>
</dbReference>
<dbReference type="InterPro" id="IPR024094">
    <property type="entry name" value="Cyt_f_lg_dom"/>
</dbReference>
<dbReference type="InterPro" id="IPR036826">
    <property type="entry name" value="Cyt_f_lg_dom_sf"/>
</dbReference>
<dbReference type="InterPro" id="IPR011054">
    <property type="entry name" value="Rudment_hybrid_motif"/>
</dbReference>
<dbReference type="NCBIfam" id="NF002736">
    <property type="entry name" value="PRK02693.1"/>
    <property type="match status" value="1"/>
</dbReference>
<dbReference type="PANTHER" id="PTHR33288">
    <property type="match status" value="1"/>
</dbReference>
<dbReference type="PANTHER" id="PTHR33288:SF10">
    <property type="entry name" value="CYTOCHROME F"/>
    <property type="match status" value="1"/>
</dbReference>
<dbReference type="Pfam" id="PF01333">
    <property type="entry name" value="Apocytochr_F_C"/>
    <property type="match status" value="1"/>
</dbReference>
<dbReference type="Pfam" id="PF16639">
    <property type="entry name" value="Apocytochr_F_N"/>
    <property type="match status" value="1"/>
</dbReference>
<dbReference type="PRINTS" id="PR00610">
    <property type="entry name" value="CYTOCHROMEF"/>
</dbReference>
<dbReference type="SUPFAM" id="SSF103431">
    <property type="entry name" value="Cytochrome f subunit of the cytochrome b6f complex, transmembrane anchor"/>
    <property type="match status" value="1"/>
</dbReference>
<dbReference type="SUPFAM" id="SSF49441">
    <property type="entry name" value="Cytochrome f, large domain"/>
    <property type="match status" value="1"/>
</dbReference>
<dbReference type="SUPFAM" id="SSF51246">
    <property type="entry name" value="Rudiment single hybrid motif"/>
    <property type="match status" value="1"/>
</dbReference>
<dbReference type="PROSITE" id="PS51010">
    <property type="entry name" value="CYTF"/>
    <property type="match status" value="1"/>
</dbReference>
<accession>Q3AWL6</accession>
<keyword id="KW-0249">Electron transport</keyword>
<keyword id="KW-0349">Heme</keyword>
<keyword id="KW-0408">Iron</keyword>
<keyword id="KW-0472">Membrane</keyword>
<keyword id="KW-0479">Metal-binding</keyword>
<keyword id="KW-0602">Photosynthesis</keyword>
<keyword id="KW-1185">Reference proteome</keyword>
<keyword id="KW-0732">Signal</keyword>
<keyword id="KW-0793">Thylakoid</keyword>
<keyword id="KW-0812">Transmembrane</keyword>
<keyword id="KW-1133">Transmembrane helix</keyword>
<keyword id="KW-0813">Transport</keyword>
<comment type="function">
    <text evidence="1">Component of the cytochrome b6-f complex, which mediates electron transfer between photosystem II (PSII) and photosystem I (PSI), cyclic electron flow around PSI, and state transitions.</text>
</comment>
<comment type="cofactor">
    <cofactor evidence="1">
        <name>heme</name>
        <dbReference type="ChEBI" id="CHEBI:30413"/>
    </cofactor>
    <text evidence="1">Binds 1 heme group covalently.</text>
</comment>
<comment type="subunit">
    <text evidence="1">The 4 large subunits of the cytochrome b6-f complex are cytochrome b6, subunit IV (17 kDa polypeptide, PetD), cytochrome f and the Rieske protein, while the 4 small subunits are PetG, PetL, PetM and PetN. The complex functions as a dimer.</text>
</comment>
<comment type="subcellular location">
    <subcellularLocation>
        <location evidence="1">Cellular thylakoid membrane</location>
        <topology evidence="1">Single-pass membrane protein</topology>
    </subcellularLocation>
</comment>
<comment type="similarity">
    <text evidence="1">Belongs to the cytochrome f family.</text>
</comment>
<proteinExistence type="inferred from homology"/>
<evidence type="ECO:0000255" key="1">
    <source>
        <dbReference type="HAMAP-Rule" id="MF_00610"/>
    </source>
</evidence>
<sequence>MRRHLSLVLGSLVIGLALLIAPGASWAYPFWAQQNYDSPREATGKIVCANCHIAKKLTQAEVPQSVLPDSVFTASVKVPYEEGIKEIGADGSEVQLQVGAVVMLPDGFTLAPQDRWTDEIKEETEGVYFTQYSDEQPNILLVGPIPGDQNQEIVFPVLSPDPATDSNIHFGKYQIHVGGNRGRGQVYPTGEKSNNTVFTAPAEGKVASIDAGDNGASVVTIQAADGTSTSETIPVGPQLLVNVGDSVAAGDAITNDPNVGGFGQVDAEIVLQNPVRIYGLLAFFAAVAIAQIMLVLKKRQIEKVQAAEGNF</sequence>
<name>CYF_SYNS9</name>
<organism>
    <name type="scientific">Synechococcus sp. (strain CC9902)</name>
    <dbReference type="NCBI Taxonomy" id="316279"/>
    <lineage>
        <taxon>Bacteria</taxon>
        <taxon>Bacillati</taxon>
        <taxon>Cyanobacteriota</taxon>
        <taxon>Cyanophyceae</taxon>
        <taxon>Synechococcales</taxon>
        <taxon>Synechococcaceae</taxon>
        <taxon>Synechococcus</taxon>
    </lineage>
</organism>
<reference key="1">
    <citation type="submission" date="2005-08" db="EMBL/GenBank/DDBJ databases">
        <title>Complete sequence of Synechococcus sp. CC9902.</title>
        <authorList>
            <person name="Copeland A."/>
            <person name="Lucas S."/>
            <person name="Lapidus A."/>
            <person name="Barry K."/>
            <person name="Detter J.C."/>
            <person name="Glavina T."/>
            <person name="Hammon N."/>
            <person name="Israni S."/>
            <person name="Pitluck S."/>
            <person name="Martinez M."/>
            <person name="Schmutz J."/>
            <person name="Larimer F."/>
            <person name="Land M."/>
            <person name="Kyrpides N."/>
            <person name="Ivanova N."/>
            <person name="Richardson P."/>
        </authorList>
    </citation>
    <scope>NUCLEOTIDE SEQUENCE [LARGE SCALE GENOMIC DNA]</scope>
    <source>
        <strain>CC9902</strain>
    </source>
</reference>
<protein>
    <recommendedName>
        <fullName evidence="1">Cytochrome f</fullName>
    </recommendedName>
</protein>
<feature type="signal peptide" evidence="1">
    <location>
        <begin position="1"/>
        <end position="27"/>
    </location>
</feature>
<feature type="chain" id="PRO_0000342038" description="Cytochrome f">
    <location>
        <begin position="28"/>
        <end position="311"/>
    </location>
</feature>
<feature type="transmembrane region" description="Helical" evidence="1">
    <location>
        <begin position="277"/>
        <end position="297"/>
    </location>
</feature>
<feature type="binding site" description="axial binding residue" evidence="1">
    <location>
        <position position="28"/>
    </location>
    <ligand>
        <name>heme</name>
        <dbReference type="ChEBI" id="CHEBI:30413"/>
    </ligand>
    <ligandPart>
        <name>Fe</name>
        <dbReference type="ChEBI" id="CHEBI:18248"/>
    </ligandPart>
</feature>
<feature type="binding site" description="covalent" evidence="1">
    <location>
        <position position="48"/>
    </location>
    <ligand>
        <name>heme</name>
        <dbReference type="ChEBI" id="CHEBI:30413"/>
    </ligand>
</feature>
<feature type="binding site" description="covalent" evidence="1">
    <location>
        <position position="51"/>
    </location>
    <ligand>
        <name>heme</name>
        <dbReference type="ChEBI" id="CHEBI:30413"/>
    </ligand>
</feature>
<feature type="binding site" description="axial binding residue" evidence="1">
    <location>
        <position position="52"/>
    </location>
    <ligand>
        <name>heme</name>
        <dbReference type="ChEBI" id="CHEBI:30413"/>
    </ligand>
    <ligandPart>
        <name>Fe</name>
        <dbReference type="ChEBI" id="CHEBI:18248"/>
    </ligandPart>
</feature>
<gene>
    <name evidence="1" type="primary">petA</name>
    <name type="ordered locus">Syncc9902_1735</name>
</gene>